<reference evidence="4" key="1">
    <citation type="journal article" date="2016" name="Microbiol. Immunol.">
        <title>Characterization of Pseudomonas aeruginosa phage KPP21 belonging to family Podoviridae genus N4-like viruses isolated in Japan.</title>
        <authorList>
            <person name="Shigehisa R."/>
            <person name="Uchiyama J."/>
            <person name="Kato S."/>
            <person name="Takemura-Uchiyama I."/>
            <person name="Yamaguchi K."/>
            <person name="Miyata R."/>
            <person name="Ujihara T."/>
            <person name="Sakaguchi Y."/>
            <person name="Okamoto N."/>
            <person name="Shimakura H."/>
            <person name="Daibata M."/>
            <person name="Sakaguchi M."/>
            <person name="Matsuzaki S."/>
        </authorList>
    </citation>
    <scope>NUCLEOTIDE SEQUENCE [GENOMIC DNA]</scope>
    <scope>PROTEIN SEQUENCE OF 2-21</scope>
    <scope>SUBCELLULAR LOCATION</scope>
</reference>
<name>CAPSD_BPK21</name>
<organism evidence="5">
    <name type="scientific">Pseudomonas phage KPP21</name>
    <dbReference type="NCBI Taxonomy" id="1678082"/>
    <lineage>
        <taxon>Viruses</taxon>
        <taxon>Duplodnaviria</taxon>
        <taxon>Heunggongvirae</taxon>
        <taxon>Uroviricota</taxon>
        <taxon>Caudoviricetes</taxon>
        <taxon>Schitoviridae</taxon>
        <taxon>Migulavirinae</taxon>
        <taxon>Luzseptimavirus</taxon>
        <taxon>Luzseptimavirus KPP21</taxon>
    </lineage>
</organism>
<proteinExistence type="evidence at protein level"/>
<dbReference type="EMBL" id="LC064302">
    <property type="protein sequence ID" value="BAR94566.1"/>
    <property type="molecule type" value="Genomic_DNA"/>
</dbReference>
<dbReference type="RefSeq" id="YP_009218956.1">
    <property type="nucleotide sequence ID" value="NC_029017.1"/>
</dbReference>
<dbReference type="SMR" id="A0A0H5AXT3"/>
<dbReference type="GeneID" id="26645223"/>
<dbReference type="KEGG" id="vg:26645223"/>
<dbReference type="OrthoDB" id="2832at10239"/>
<dbReference type="Proteomes" id="UP000203732">
    <property type="component" value="Genome"/>
</dbReference>
<dbReference type="GO" id="GO:0019028">
    <property type="term" value="C:viral capsid"/>
    <property type="evidence" value="ECO:0007669"/>
    <property type="project" value="UniProtKB-KW"/>
</dbReference>
<dbReference type="NCBIfam" id="TIGR04387">
    <property type="entry name" value="capsid_maj_N4"/>
    <property type="match status" value="1"/>
</dbReference>
<dbReference type="Pfam" id="PF25209">
    <property type="entry name" value="Phage_capsid_4"/>
    <property type="match status" value="1"/>
</dbReference>
<protein>
    <recommendedName>
        <fullName evidence="4">Major capsid protein</fullName>
    </recommendedName>
    <alternativeName>
        <fullName evidence="5">Major virion protein</fullName>
    </alternativeName>
</protein>
<accession>A0A0H5AXT3</accession>
<accession>C0HJU8</accession>
<evidence type="ECO:0000250" key="1">
    <source>
        <dbReference type="UniProtKB" id="P03713"/>
    </source>
</evidence>
<evidence type="ECO:0000256" key="2">
    <source>
        <dbReference type="SAM" id="MobiDB-lite"/>
    </source>
</evidence>
<evidence type="ECO:0000269" key="3">
    <source>
    </source>
</evidence>
<evidence type="ECO:0000305" key="4"/>
<evidence type="ECO:0000312" key="5">
    <source>
        <dbReference type="EMBL" id="BAR94566.1"/>
    </source>
</evidence>
<comment type="function">
    <text evidence="1">Assembles to form an icosahedral capsid.</text>
</comment>
<comment type="subcellular location">
    <subcellularLocation>
        <location evidence="3">Virion</location>
    </subcellularLocation>
</comment>
<organismHost>
    <name type="scientific">Pseudomonas aeruginosa</name>
    <dbReference type="NCBI Taxonomy" id="287"/>
</organismHost>
<keyword id="KW-0167">Capsid protein</keyword>
<keyword id="KW-0903">Direct protein sequencing</keyword>
<keyword id="KW-1185">Reference proteome</keyword>
<keyword id="KW-0946">Virion</keyword>
<feature type="initiator methionine" description="Removed" evidence="3">
    <location>
        <position position="1"/>
    </location>
</feature>
<feature type="chain" id="PRO_0000434984" description="Major capsid protein" evidence="4">
    <location>
        <begin position="2"/>
        <end position="397"/>
    </location>
</feature>
<feature type="region of interest" description="Disordered" evidence="2">
    <location>
        <begin position="1"/>
        <end position="24"/>
    </location>
</feature>
<sequence length="397" mass="44139">MAAPDPYKPGKYNDPAGGVESSIGPQTQTQYWMKQALIDARKEAYFGQLASVFGMPKHYGKKIVRMHYIPLLDDRNINDQGIDASGATIANGNLYGSSRDVGTIVGKMPTLTEVGGRVNRVGFKRVLLEGKLEKYGFFREYTQESLDFDSDAELDMHVGREMLKGANEMTEDLLQIDLLNSAGVVRYPGAATQDSEVDATTEVTYDSLMRLNIDLDNNRAPKGTKMITGTRMIDTRTIPGCRPLYCGSELIPTLKAMKDNHGNPAFISIEKYAAGGNTFIGEIGAIDQFRIIINPQMMHWQGAGKAVDPAADGYHDFNDKYSIFPMLVISSEAFTTVGFQTDGKNVKFKIYNKKPGEATADRLDPYGEMGFMSIKWYYGFMVYRPEWIALIKTVARL</sequence>